<name>GSA1_STAAT</name>
<evidence type="ECO:0000255" key="1">
    <source>
        <dbReference type="HAMAP-Rule" id="MF_00375"/>
    </source>
</evidence>
<organism>
    <name type="scientific">Staphylococcus aureus (strain USA300 / TCH1516)</name>
    <dbReference type="NCBI Taxonomy" id="451516"/>
    <lineage>
        <taxon>Bacteria</taxon>
        <taxon>Bacillati</taxon>
        <taxon>Bacillota</taxon>
        <taxon>Bacilli</taxon>
        <taxon>Bacillales</taxon>
        <taxon>Staphylococcaceae</taxon>
        <taxon>Staphylococcus</taxon>
    </lineage>
</organism>
<comment type="catalytic activity">
    <reaction evidence="1">
        <text>(S)-4-amino-5-oxopentanoate = 5-aminolevulinate</text>
        <dbReference type="Rhea" id="RHEA:14265"/>
        <dbReference type="ChEBI" id="CHEBI:57501"/>
        <dbReference type="ChEBI" id="CHEBI:356416"/>
        <dbReference type="EC" id="5.4.3.8"/>
    </reaction>
</comment>
<comment type="cofactor">
    <cofactor evidence="1">
        <name>pyridoxal 5'-phosphate</name>
        <dbReference type="ChEBI" id="CHEBI:597326"/>
    </cofactor>
</comment>
<comment type="pathway">
    <text evidence="1">Porphyrin-containing compound metabolism; protoporphyrin-IX biosynthesis; 5-aminolevulinate from L-glutamyl-tRNA(Glu): step 2/2.</text>
</comment>
<comment type="subunit">
    <text evidence="1">Homodimer.</text>
</comment>
<comment type="subcellular location">
    <subcellularLocation>
        <location evidence="1">Cytoplasm</location>
    </subcellularLocation>
</comment>
<comment type="similarity">
    <text evidence="1">Belongs to the class-III pyridoxal-phosphate-dependent aminotransferase family. HemL subfamily.</text>
</comment>
<proteinExistence type="inferred from homology"/>
<feature type="chain" id="PRO_0000382379" description="Glutamate-1-semialdehyde 2,1-aminomutase 1">
    <location>
        <begin position="1"/>
        <end position="428"/>
    </location>
</feature>
<feature type="modified residue" description="N6-(pyridoxal phosphate)lysine" evidence="1">
    <location>
        <position position="267"/>
    </location>
</feature>
<gene>
    <name evidence="1" type="primary">hemL1</name>
    <name type="ordered locus">USA300HOU_1659</name>
</gene>
<sequence length="428" mass="46388">MRYTKSEEAMKVAETLMPGGVNSPVRAFKSVDTPAIFMDHGKGSKIYDIDGNEYIDYVLSWGPLILGHRDPQVISHLHEAIDKGTSFGASTLLENKLAQLVIDRVPSIEKVRMVSSGTEATLDTLRLARGYTGRNKIVKFEGCYHGHSDSLLIKAGSGVATLGLPDSPGVPEGIAKNTITVPYNDLDALKIAFEKFGNDIAGVIVEPVAGNMGVVPPIEGFLQGLRDITTEYGALLIFDEVMTGFRVGYHCAQGYFGVTPDLTCLGKVIGGGLPVGAFGGKKEIMDHIAPLGNIYQAGTLSGNPLAMTSGYETLSQLTPETYEYFNMLGDILEDGLKRVFAKHNVPITVNRAGSMIGYFLNEGPVTNFEQANKSDLKLFAEMYREMAKEGVFLPPSQFEGTFLSTAHTKEDIEKTIQAFDTALSRIVK</sequence>
<dbReference type="EC" id="5.4.3.8" evidence="1"/>
<dbReference type="EMBL" id="CP000730">
    <property type="protein sequence ID" value="ABX29666.1"/>
    <property type="molecule type" value="Genomic_DNA"/>
</dbReference>
<dbReference type="SMR" id="A8Z2I8"/>
<dbReference type="KEGG" id="sax:USA300HOU_1659"/>
<dbReference type="HOGENOM" id="CLU_016922_1_5_9"/>
<dbReference type="UniPathway" id="UPA00251">
    <property type="reaction ID" value="UER00317"/>
</dbReference>
<dbReference type="GO" id="GO:0005737">
    <property type="term" value="C:cytoplasm"/>
    <property type="evidence" value="ECO:0007669"/>
    <property type="project" value="UniProtKB-SubCell"/>
</dbReference>
<dbReference type="GO" id="GO:0042286">
    <property type="term" value="F:glutamate-1-semialdehyde 2,1-aminomutase activity"/>
    <property type="evidence" value="ECO:0007669"/>
    <property type="project" value="UniProtKB-UniRule"/>
</dbReference>
<dbReference type="GO" id="GO:0030170">
    <property type="term" value="F:pyridoxal phosphate binding"/>
    <property type="evidence" value="ECO:0007669"/>
    <property type="project" value="InterPro"/>
</dbReference>
<dbReference type="GO" id="GO:0008483">
    <property type="term" value="F:transaminase activity"/>
    <property type="evidence" value="ECO:0007669"/>
    <property type="project" value="InterPro"/>
</dbReference>
<dbReference type="GO" id="GO:0006782">
    <property type="term" value="P:protoporphyrinogen IX biosynthetic process"/>
    <property type="evidence" value="ECO:0007669"/>
    <property type="project" value="UniProtKB-UniRule"/>
</dbReference>
<dbReference type="CDD" id="cd00610">
    <property type="entry name" value="OAT_like"/>
    <property type="match status" value="1"/>
</dbReference>
<dbReference type="FunFam" id="3.40.640.10:FF:000021">
    <property type="entry name" value="Glutamate-1-semialdehyde 2,1-aminomutase"/>
    <property type="match status" value="1"/>
</dbReference>
<dbReference type="Gene3D" id="3.90.1150.10">
    <property type="entry name" value="Aspartate Aminotransferase, domain 1"/>
    <property type="match status" value="1"/>
</dbReference>
<dbReference type="Gene3D" id="3.40.640.10">
    <property type="entry name" value="Type I PLP-dependent aspartate aminotransferase-like (Major domain)"/>
    <property type="match status" value="1"/>
</dbReference>
<dbReference type="HAMAP" id="MF_00375">
    <property type="entry name" value="HemL_aminotrans_3"/>
    <property type="match status" value="1"/>
</dbReference>
<dbReference type="InterPro" id="IPR004639">
    <property type="entry name" value="4pyrrol_synth_GluAld_NH2Trfase"/>
</dbReference>
<dbReference type="InterPro" id="IPR005814">
    <property type="entry name" value="Aminotrans_3"/>
</dbReference>
<dbReference type="InterPro" id="IPR049704">
    <property type="entry name" value="Aminotrans_3_PPA_site"/>
</dbReference>
<dbReference type="InterPro" id="IPR015424">
    <property type="entry name" value="PyrdxlP-dep_Trfase"/>
</dbReference>
<dbReference type="InterPro" id="IPR015421">
    <property type="entry name" value="PyrdxlP-dep_Trfase_major"/>
</dbReference>
<dbReference type="InterPro" id="IPR015422">
    <property type="entry name" value="PyrdxlP-dep_Trfase_small"/>
</dbReference>
<dbReference type="NCBIfam" id="TIGR00713">
    <property type="entry name" value="hemL"/>
    <property type="match status" value="1"/>
</dbReference>
<dbReference type="NCBIfam" id="NF000818">
    <property type="entry name" value="PRK00062.1"/>
    <property type="match status" value="1"/>
</dbReference>
<dbReference type="PANTHER" id="PTHR43713">
    <property type="entry name" value="GLUTAMATE-1-SEMIALDEHYDE 2,1-AMINOMUTASE"/>
    <property type="match status" value="1"/>
</dbReference>
<dbReference type="PANTHER" id="PTHR43713:SF3">
    <property type="entry name" value="GLUTAMATE-1-SEMIALDEHYDE 2,1-AMINOMUTASE 1, CHLOROPLASTIC-RELATED"/>
    <property type="match status" value="1"/>
</dbReference>
<dbReference type="Pfam" id="PF00202">
    <property type="entry name" value="Aminotran_3"/>
    <property type="match status" value="1"/>
</dbReference>
<dbReference type="SUPFAM" id="SSF53383">
    <property type="entry name" value="PLP-dependent transferases"/>
    <property type="match status" value="1"/>
</dbReference>
<dbReference type="PROSITE" id="PS00600">
    <property type="entry name" value="AA_TRANSFER_CLASS_3"/>
    <property type="match status" value="1"/>
</dbReference>
<accession>A8Z2I8</accession>
<reference key="1">
    <citation type="journal article" date="2007" name="BMC Microbiol.">
        <title>Subtle genetic changes enhance virulence of methicillin resistant and sensitive Staphylococcus aureus.</title>
        <authorList>
            <person name="Highlander S.K."/>
            <person name="Hulten K.G."/>
            <person name="Qin X."/>
            <person name="Jiang H."/>
            <person name="Yerrapragada S."/>
            <person name="Mason E.O. Jr."/>
            <person name="Shang Y."/>
            <person name="Williams T.M."/>
            <person name="Fortunov R.M."/>
            <person name="Liu Y."/>
            <person name="Igboeli O."/>
            <person name="Petrosino J."/>
            <person name="Tirumalai M."/>
            <person name="Uzman A."/>
            <person name="Fox G.E."/>
            <person name="Cardenas A.M."/>
            <person name="Muzny D.M."/>
            <person name="Hemphill L."/>
            <person name="Ding Y."/>
            <person name="Dugan S."/>
            <person name="Blyth P.R."/>
            <person name="Buhay C.J."/>
            <person name="Dinh H.H."/>
            <person name="Hawes A.C."/>
            <person name="Holder M."/>
            <person name="Kovar C.L."/>
            <person name="Lee S.L."/>
            <person name="Liu W."/>
            <person name="Nazareth L.V."/>
            <person name="Wang Q."/>
            <person name="Zhou J."/>
            <person name="Kaplan S.L."/>
            <person name="Weinstock G.M."/>
        </authorList>
    </citation>
    <scope>NUCLEOTIDE SEQUENCE [LARGE SCALE GENOMIC DNA]</scope>
    <source>
        <strain>USA300 / TCH1516</strain>
    </source>
</reference>
<keyword id="KW-0963">Cytoplasm</keyword>
<keyword id="KW-0413">Isomerase</keyword>
<keyword id="KW-0627">Porphyrin biosynthesis</keyword>
<keyword id="KW-0663">Pyridoxal phosphate</keyword>
<protein>
    <recommendedName>
        <fullName evidence="1">Glutamate-1-semialdehyde 2,1-aminomutase 1</fullName>
        <shortName evidence="1">GSA 1</shortName>
        <ecNumber evidence="1">5.4.3.8</ecNumber>
    </recommendedName>
    <alternativeName>
        <fullName evidence="1">Glutamate-1-semialdehyde aminotransferase 1</fullName>
        <shortName evidence="1">GSA-AT 1</shortName>
    </alternativeName>
</protein>